<proteinExistence type="inferred from homology"/>
<sequence>MSAERLVYVMGPSGAGKDSLLAYARKHVREPRIAFAHRYITRKSDGHENHVELTRDEFAARAQLGFFALEWSSHGFRYGVGVEIDAWLAAGSVVVVSGSRAHLPAALERYPQMCVVHIDAAPHVLAERLATRGRETADEIRARLARSVRWAVPDGVALTAIDNSGTLDDAGRVLVALLEGLARS</sequence>
<evidence type="ECO:0000255" key="1">
    <source>
        <dbReference type="HAMAP-Rule" id="MF_00836"/>
    </source>
</evidence>
<keyword id="KW-0067">ATP-binding</keyword>
<keyword id="KW-0547">Nucleotide-binding</keyword>
<keyword id="KW-1185">Reference proteome</keyword>
<keyword id="KW-0808">Transferase</keyword>
<protein>
    <recommendedName>
        <fullName evidence="1">Ribose 1,5-bisphosphate phosphokinase PhnN</fullName>
        <ecNumber evidence="1">2.7.4.23</ecNumber>
    </recommendedName>
    <alternativeName>
        <fullName evidence="1">Ribose 1,5-bisphosphokinase</fullName>
    </alternativeName>
</protein>
<organism>
    <name type="scientific">Burkholderia pseudomallei (strain K96243)</name>
    <dbReference type="NCBI Taxonomy" id="272560"/>
    <lineage>
        <taxon>Bacteria</taxon>
        <taxon>Pseudomonadati</taxon>
        <taxon>Pseudomonadota</taxon>
        <taxon>Betaproteobacteria</taxon>
        <taxon>Burkholderiales</taxon>
        <taxon>Burkholderiaceae</taxon>
        <taxon>Burkholderia</taxon>
        <taxon>pseudomallei group</taxon>
    </lineage>
</organism>
<feature type="chain" id="PRO_0000412777" description="Ribose 1,5-bisphosphate phosphokinase PhnN">
    <location>
        <begin position="1"/>
        <end position="184"/>
    </location>
</feature>
<feature type="binding site" evidence="1">
    <location>
        <begin position="11"/>
        <end position="18"/>
    </location>
    <ligand>
        <name>ATP</name>
        <dbReference type="ChEBI" id="CHEBI:30616"/>
    </ligand>
</feature>
<comment type="function">
    <text evidence="1">Catalyzes the phosphorylation of ribose 1,5-bisphosphate to 5-phospho-D-ribosyl alpha-1-diphosphate (PRPP).</text>
</comment>
<comment type="catalytic activity">
    <reaction evidence="1">
        <text>alpha-D-ribose 1,5-bisphosphate + ATP = 5-phospho-alpha-D-ribose 1-diphosphate + ADP</text>
        <dbReference type="Rhea" id="RHEA:20109"/>
        <dbReference type="ChEBI" id="CHEBI:30616"/>
        <dbReference type="ChEBI" id="CHEBI:58017"/>
        <dbReference type="ChEBI" id="CHEBI:68688"/>
        <dbReference type="ChEBI" id="CHEBI:456216"/>
        <dbReference type="EC" id="2.7.4.23"/>
    </reaction>
</comment>
<comment type="pathway">
    <text evidence="1">Metabolic intermediate biosynthesis; 5-phospho-alpha-D-ribose 1-diphosphate biosynthesis; 5-phospho-alpha-D-ribose 1-diphosphate from D-ribose 5-phosphate (route II): step 3/3.</text>
</comment>
<comment type="similarity">
    <text evidence="1">Belongs to the ribose 1,5-bisphosphokinase family.</text>
</comment>
<name>PHNN_BURPS</name>
<reference key="1">
    <citation type="journal article" date="2004" name="Proc. Natl. Acad. Sci. U.S.A.">
        <title>Genomic plasticity of the causative agent of melioidosis, Burkholderia pseudomallei.</title>
        <authorList>
            <person name="Holden M.T.G."/>
            <person name="Titball R.W."/>
            <person name="Peacock S.J."/>
            <person name="Cerdeno-Tarraga A.-M."/>
            <person name="Atkins T."/>
            <person name="Crossman L.C."/>
            <person name="Pitt T."/>
            <person name="Churcher C."/>
            <person name="Mungall K.L."/>
            <person name="Bentley S.D."/>
            <person name="Sebaihia M."/>
            <person name="Thomson N.R."/>
            <person name="Bason N."/>
            <person name="Beacham I.R."/>
            <person name="Brooks K."/>
            <person name="Brown K.A."/>
            <person name="Brown N.F."/>
            <person name="Challis G.L."/>
            <person name="Cherevach I."/>
            <person name="Chillingworth T."/>
            <person name="Cronin A."/>
            <person name="Crossett B."/>
            <person name="Davis P."/>
            <person name="DeShazer D."/>
            <person name="Feltwell T."/>
            <person name="Fraser A."/>
            <person name="Hance Z."/>
            <person name="Hauser H."/>
            <person name="Holroyd S."/>
            <person name="Jagels K."/>
            <person name="Keith K.E."/>
            <person name="Maddison M."/>
            <person name="Moule S."/>
            <person name="Price C."/>
            <person name="Quail M.A."/>
            <person name="Rabbinowitsch E."/>
            <person name="Rutherford K."/>
            <person name="Sanders M."/>
            <person name="Simmonds M."/>
            <person name="Songsivilai S."/>
            <person name="Stevens K."/>
            <person name="Tumapa S."/>
            <person name="Vesaratchavest M."/>
            <person name="Whitehead S."/>
            <person name="Yeats C."/>
            <person name="Barrell B.G."/>
            <person name="Oyston P.C.F."/>
            <person name="Parkhill J."/>
        </authorList>
    </citation>
    <scope>NUCLEOTIDE SEQUENCE [LARGE SCALE GENOMIC DNA]</scope>
    <source>
        <strain>K96243</strain>
    </source>
</reference>
<dbReference type="EC" id="2.7.4.23" evidence="1"/>
<dbReference type="EMBL" id="BX571965">
    <property type="protein sequence ID" value="CAH36870.1"/>
    <property type="molecule type" value="Genomic_DNA"/>
</dbReference>
<dbReference type="RefSeq" id="WP_004527702.1">
    <property type="nucleotide sequence ID" value="NZ_CP009538.1"/>
</dbReference>
<dbReference type="RefSeq" id="YP_109454.1">
    <property type="nucleotide sequence ID" value="NC_006350.1"/>
</dbReference>
<dbReference type="SMR" id="Q63R14"/>
<dbReference type="STRING" id="272560.BPSL2860"/>
<dbReference type="GeneID" id="93061450"/>
<dbReference type="KEGG" id="bps:BPSL2860"/>
<dbReference type="PATRIC" id="fig|272560.51.peg.2440"/>
<dbReference type="eggNOG" id="COG3709">
    <property type="taxonomic scope" value="Bacteria"/>
</dbReference>
<dbReference type="UniPathway" id="UPA00087">
    <property type="reaction ID" value="UER00175"/>
</dbReference>
<dbReference type="Proteomes" id="UP000000605">
    <property type="component" value="Chromosome 1"/>
</dbReference>
<dbReference type="GO" id="GO:0005524">
    <property type="term" value="F:ATP binding"/>
    <property type="evidence" value="ECO:0007669"/>
    <property type="project" value="UniProtKB-KW"/>
</dbReference>
<dbReference type="GO" id="GO:0033863">
    <property type="term" value="F:ribose 1,5-bisphosphate phosphokinase activity"/>
    <property type="evidence" value="ECO:0007669"/>
    <property type="project" value="UniProtKB-UniRule"/>
</dbReference>
<dbReference type="GO" id="GO:0006015">
    <property type="term" value="P:5-phosphoribose 1-diphosphate biosynthetic process"/>
    <property type="evidence" value="ECO:0007669"/>
    <property type="project" value="UniProtKB-UniRule"/>
</dbReference>
<dbReference type="GO" id="GO:0019634">
    <property type="term" value="P:organic phosphonate metabolic process"/>
    <property type="evidence" value="ECO:0007669"/>
    <property type="project" value="UniProtKB-UniRule"/>
</dbReference>
<dbReference type="Gene3D" id="3.40.50.300">
    <property type="entry name" value="P-loop containing nucleotide triphosphate hydrolases"/>
    <property type="match status" value="1"/>
</dbReference>
<dbReference type="HAMAP" id="MF_00836">
    <property type="entry name" value="PhnN"/>
    <property type="match status" value="1"/>
</dbReference>
<dbReference type="InterPro" id="IPR008145">
    <property type="entry name" value="GK/Ca_channel_bsu"/>
</dbReference>
<dbReference type="InterPro" id="IPR027417">
    <property type="entry name" value="P-loop_NTPase"/>
</dbReference>
<dbReference type="InterPro" id="IPR012699">
    <property type="entry name" value="PhnN"/>
</dbReference>
<dbReference type="NCBIfam" id="TIGR02322">
    <property type="entry name" value="phosphon_PhnN"/>
    <property type="match status" value="1"/>
</dbReference>
<dbReference type="NCBIfam" id="NF007485">
    <property type="entry name" value="PRK10078.1"/>
    <property type="match status" value="1"/>
</dbReference>
<dbReference type="Pfam" id="PF13238">
    <property type="entry name" value="AAA_18"/>
    <property type="match status" value="1"/>
</dbReference>
<dbReference type="SMART" id="SM00072">
    <property type="entry name" value="GuKc"/>
    <property type="match status" value="1"/>
</dbReference>
<dbReference type="SUPFAM" id="SSF52540">
    <property type="entry name" value="P-loop containing nucleoside triphosphate hydrolases"/>
    <property type="match status" value="1"/>
</dbReference>
<accession>Q63R14</accession>
<gene>
    <name evidence="1" type="primary">phnN</name>
    <name type="ordered locus">BPSL2860</name>
</gene>